<sequence length="109" mass="11863">YLTEISGKGHIEIVKCLVNLGANITTNNNYAIIQASEKGHLEVVKYLVGQNANIRSENNLAVRLASGNGHLEVVEYLVNLGADIRSENNYAIQSASQNGHLEVIEYLVA</sequence>
<organismHost>
    <name type="scientific">Acanthamoeba polyphaga</name>
    <name type="common">Amoeba</name>
    <dbReference type="NCBI Taxonomy" id="5757"/>
</organismHost>
<gene>
    <name type="ordered locus">MIMI_L482</name>
</gene>
<accession>Q5UQF2</accession>
<feature type="chain" id="PRO_0000067170" description="Putative ankyrin repeat protein L482">
    <location>
        <begin position="1" status="less than"/>
        <end position="109"/>
    </location>
</feature>
<feature type="repeat" description="ANK 1">
    <location>
        <begin position="1" status="less than"/>
        <end position="26"/>
    </location>
</feature>
<feature type="repeat" description="ANK 2">
    <location>
        <begin position="27"/>
        <end position="56"/>
    </location>
</feature>
<feature type="repeat" description="ANK 3">
    <location>
        <begin position="57"/>
        <end position="86"/>
    </location>
</feature>
<feature type="repeat" description="ANK 4">
    <location>
        <begin position="88"/>
        <end position="109"/>
    </location>
</feature>
<feature type="non-terminal residue">
    <location>
        <position position="1"/>
    </location>
</feature>
<name>YL482_MIMIV</name>
<dbReference type="EMBL" id="AY653733">
    <property type="protein sequence ID" value="AAV50748.1"/>
    <property type="molecule type" value="Genomic_DNA"/>
</dbReference>
<dbReference type="SMR" id="Q5UQF2"/>
<dbReference type="Proteomes" id="UP000001134">
    <property type="component" value="Genome"/>
</dbReference>
<dbReference type="Gene3D" id="1.25.40.20">
    <property type="entry name" value="Ankyrin repeat-containing domain"/>
    <property type="match status" value="1"/>
</dbReference>
<dbReference type="InterPro" id="IPR002110">
    <property type="entry name" value="Ankyrin_rpt"/>
</dbReference>
<dbReference type="InterPro" id="IPR036770">
    <property type="entry name" value="Ankyrin_rpt-contain_sf"/>
</dbReference>
<dbReference type="PANTHER" id="PTHR44207:SF2">
    <property type="entry name" value="REPEAT PROTEIN, PUTATIVE-RELATED"/>
    <property type="match status" value="1"/>
</dbReference>
<dbReference type="PANTHER" id="PTHR44207">
    <property type="entry name" value="SURFACE ANTIGEN BSPA-LIKE-RELATED"/>
    <property type="match status" value="1"/>
</dbReference>
<dbReference type="Pfam" id="PF12796">
    <property type="entry name" value="Ank_2"/>
    <property type="match status" value="1"/>
</dbReference>
<dbReference type="Pfam" id="PF13637">
    <property type="entry name" value="Ank_4"/>
    <property type="match status" value="1"/>
</dbReference>
<dbReference type="SMART" id="SM00248">
    <property type="entry name" value="ANK"/>
    <property type="match status" value="2"/>
</dbReference>
<dbReference type="SUPFAM" id="SSF48403">
    <property type="entry name" value="Ankyrin repeat"/>
    <property type="match status" value="1"/>
</dbReference>
<dbReference type="PROSITE" id="PS50297">
    <property type="entry name" value="ANK_REP_REGION"/>
    <property type="match status" value="1"/>
</dbReference>
<dbReference type="PROSITE" id="PS50088">
    <property type="entry name" value="ANK_REPEAT"/>
    <property type="match status" value="2"/>
</dbReference>
<organism>
    <name type="scientific">Acanthamoeba polyphaga mimivirus</name>
    <name type="common">APMV</name>
    <dbReference type="NCBI Taxonomy" id="212035"/>
    <lineage>
        <taxon>Viruses</taxon>
        <taxon>Varidnaviria</taxon>
        <taxon>Bamfordvirae</taxon>
        <taxon>Nucleocytoviricota</taxon>
        <taxon>Megaviricetes</taxon>
        <taxon>Imitervirales</taxon>
        <taxon>Mimiviridae</taxon>
        <taxon>Megamimivirinae</taxon>
        <taxon>Mimivirus</taxon>
        <taxon>Mimivirus bradfordmassiliense</taxon>
    </lineage>
</organism>
<reference key="1">
    <citation type="journal article" date="2004" name="Science">
        <title>The 1.2-megabase genome sequence of Mimivirus.</title>
        <authorList>
            <person name="Raoult D."/>
            <person name="Audic S."/>
            <person name="Robert C."/>
            <person name="Abergel C."/>
            <person name="Renesto P."/>
            <person name="Ogata H."/>
            <person name="La Scola B."/>
            <person name="Susan M."/>
            <person name="Claverie J.-M."/>
        </authorList>
    </citation>
    <scope>NUCLEOTIDE SEQUENCE [LARGE SCALE GENOMIC DNA]</scope>
    <source>
        <strain>Rowbotham-Bradford</strain>
    </source>
</reference>
<proteinExistence type="predicted"/>
<protein>
    <recommendedName>
        <fullName>Putative ankyrin repeat protein L482</fullName>
    </recommendedName>
</protein>
<keyword id="KW-0040">ANK repeat</keyword>
<keyword id="KW-1185">Reference proteome</keyword>
<keyword id="KW-0677">Repeat</keyword>